<keyword id="KW-0963">Cytoplasm</keyword>
<keyword id="KW-0460">Magnesium</keyword>
<keyword id="KW-0479">Metal-binding</keyword>
<keyword id="KW-0566">Pantothenate biosynthesis</keyword>
<keyword id="KW-1185">Reference proteome</keyword>
<keyword id="KW-0808">Transferase</keyword>
<feature type="chain" id="PRO_0000297317" description="3-methyl-2-oxobutanoate hydroxymethyltransferase">
    <location>
        <begin position="1"/>
        <end position="269"/>
    </location>
</feature>
<feature type="active site" description="Proton acceptor" evidence="1">
    <location>
        <position position="186"/>
    </location>
</feature>
<feature type="binding site" evidence="1">
    <location>
        <begin position="49"/>
        <end position="50"/>
    </location>
    <ligand>
        <name>3-methyl-2-oxobutanoate</name>
        <dbReference type="ChEBI" id="CHEBI:11851"/>
    </ligand>
</feature>
<feature type="binding site" evidence="1">
    <location>
        <position position="49"/>
    </location>
    <ligand>
        <name>Mg(2+)</name>
        <dbReference type="ChEBI" id="CHEBI:18420"/>
    </ligand>
</feature>
<feature type="binding site" evidence="1">
    <location>
        <position position="88"/>
    </location>
    <ligand>
        <name>3-methyl-2-oxobutanoate</name>
        <dbReference type="ChEBI" id="CHEBI:11851"/>
    </ligand>
</feature>
<feature type="binding site" evidence="1">
    <location>
        <position position="88"/>
    </location>
    <ligand>
        <name>Mg(2+)</name>
        <dbReference type="ChEBI" id="CHEBI:18420"/>
    </ligand>
</feature>
<feature type="binding site" evidence="1">
    <location>
        <position position="118"/>
    </location>
    <ligand>
        <name>3-methyl-2-oxobutanoate</name>
        <dbReference type="ChEBI" id="CHEBI:11851"/>
    </ligand>
</feature>
<feature type="binding site" evidence="1">
    <location>
        <position position="120"/>
    </location>
    <ligand>
        <name>Mg(2+)</name>
        <dbReference type="ChEBI" id="CHEBI:18420"/>
    </ligand>
</feature>
<comment type="function">
    <text evidence="1">Catalyzes the reversible reaction in which hydroxymethyl group from 5,10-methylenetetrahydrofolate is transferred onto alpha-ketoisovalerate to form ketopantoate.</text>
</comment>
<comment type="catalytic activity">
    <reaction evidence="1">
        <text>3-methyl-2-oxobutanoate + (6R)-5,10-methylene-5,6,7,8-tetrahydrofolate + H2O = 2-dehydropantoate + (6S)-5,6,7,8-tetrahydrofolate</text>
        <dbReference type="Rhea" id="RHEA:11824"/>
        <dbReference type="ChEBI" id="CHEBI:11561"/>
        <dbReference type="ChEBI" id="CHEBI:11851"/>
        <dbReference type="ChEBI" id="CHEBI:15377"/>
        <dbReference type="ChEBI" id="CHEBI:15636"/>
        <dbReference type="ChEBI" id="CHEBI:57453"/>
        <dbReference type="EC" id="2.1.2.11"/>
    </reaction>
</comment>
<comment type="cofactor">
    <cofactor evidence="1">
        <name>Mg(2+)</name>
        <dbReference type="ChEBI" id="CHEBI:18420"/>
    </cofactor>
    <text evidence="1">Binds 1 Mg(2+) ion per subunit.</text>
</comment>
<comment type="pathway">
    <text evidence="1">Cofactor biosynthesis; (R)-pantothenate biosynthesis; (R)-pantoate from 3-methyl-2-oxobutanoate: step 1/2.</text>
</comment>
<comment type="subunit">
    <text evidence="1">Homodecamer; pentamer of dimers.</text>
</comment>
<comment type="subcellular location">
    <subcellularLocation>
        <location evidence="1">Cytoplasm</location>
    </subcellularLocation>
</comment>
<comment type="similarity">
    <text evidence="1">Belongs to the PanB family.</text>
</comment>
<accession>A1AUV8</accession>
<name>PANB_PELPD</name>
<sequence>MSDMRKKVTIPDILKMKQERRRITMMTAYDYPFARLVDSGGVDAILVGDSLGVVFSGHDNTLSVTMDEMIYHTRAVARAKPQAVLVTDMPFMSYQVSVEEACRNCGRMIQEGGAQAVKIEGGMNMSHVIRAVTSIDIPVMGHIGLTPQSIHRMGGYRVQGRKEQAERIMEDALAVQAAGAFSIVLEGIPSSLAASITAELSIPTIGIGAGPDCDGQVLVIHDILGLCEKYSPKFVKRYAELAPVITDAVNRYVEEVRSGAFPTEEHSFN</sequence>
<organism>
    <name type="scientific">Pelobacter propionicus (strain DSM 2379 / NBRC 103807 / OttBd1)</name>
    <dbReference type="NCBI Taxonomy" id="338966"/>
    <lineage>
        <taxon>Bacteria</taxon>
        <taxon>Pseudomonadati</taxon>
        <taxon>Thermodesulfobacteriota</taxon>
        <taxon>Desulfuromonadia</taxon>
        <taxon>Desulfuromonadales</taxon>
        <taxon>Desulfuromonadaceae</taxon>
        <taxon>Pelobacter</taxon>
    </lineage>
</organism>
<gene>
    <name evidence="1" type="primary">panB</name>
    <name type="ordered locus">Ppro_3536</name>
</gene>
<evidence type="ECO:0000255" key="1">
    <source>
        <dbReference type="HAMAP-Rule" id="MF_00156"/>
    </source>
</evidence>
<protein>
    <recommendedName>
        <fullName evidence="1">3-methyl-2-oxobutanoate hydroxymethyltransferase</fullName>
        <ecNumber evidence="1">2.1.2.11</ecNumber>
    </recommendedName>
    <alternativeName>
        <fullName evidence="1">Ketopantoate hydroxymethyltransferase</fullName>
        <shortName evidence="1">KPHMT</shortName>
    </alternativeName>
</protein>
<proteinExistence type="inferred from homology"/>
<reference key="1">
    <citation type="submission" date="2006-10" db="EMBL/GenBank/DDBJ databases">
        <title>Complete sequence of chromosome of Pelobacter propionicus DSM 2379.</title>
        <authorList>
            <consortium name="US DOE Joint Genome Institute"/>
            <person name="Copeland A."/>
            <person name="Lucas S."/>
            <person name="Lapidus A."/>
            <person name="Barry K."/>
            <person name="Detter J.C."/>
            <person name="Glavina del Rio T."/>
            <person name="Hammon N."/>
            <person name="Israni S."/>
            <person name="Dalin E."/>
            <person name="Tice H."/>
            <person name="Pitluck S."/>
            <person name="Saunders E."/>
            <person name="Brettin T."/>
            <person name="Bruce D."/>
            <person name="Han C."/>
            <person name="Tapia R."/>
            <person name="Schmutz J."/>
            <person name="Larimer F."/>
            <person name="Land M."/>
            <person name="Hauser L."/>
            <person name="Kyrpides N."/>
            <person name="Kim E."/>
            <person name="Lovley D."/>
            <person name="Richardson P."/>
        </authorList>
    </citation>
    <scope>NUCLEOTIDE SEQUENCE [LARGE SCALE GENOMIC DNA]</scope>
    <source>
        <strain>DSM 2379 / NBRC 103807 / OttBd1</strain>
    </source>
</reference>
<dbReference type="EC" id="2.1.2.11" evidence="1"/>
<dbReference type="EMBL" id="CP000482">
    <property type="protein sequence ID" value="ABL01129.1"/>
    <property type="molecule type" value="Genomic_DNA"/>
</dbReference>
<dbReference type="SMR" id="A1AUV8"/>
<dbReference type="STRING" id="338966.Ppro_3536"/>
<dbReference type="KEGG" id="ppd:Ppro_3536"/>
<dbReference type="eggNOG" id="COG0413">
    <property type="taxonomic scope" value="Bacteria"/>
</dbReference>
<dbReference type="HOGENOM" id="CLU_036645_1_0_7"/>
<dbReference type="OrthoDB" id="9781789at2"/>
<dbReference type="UniPathway" id="UPA00028">
    <property type="reaction ID" value="UER00003"/>
</dbReference>
<dbReference type="Proteomes" id="UP000006732">
    <property type="component" value="Chromosome"/>
</dbReference>
<dbReference type="GO" id="GO:0005737">
    <property type="term" value="C:cytoplasm"/>
    <property type="evidence" value="ECO:0007669"/>
    <property type="project" value="UniProtKB-SubCell"/>
</dbReference>
<dbReference type="GO" id="GO:0003864">
    <property type="term" value="F:3-methyl-2-oxobutanoate hydroxymethyltransferase activity"/>
    <property type="evidence" value="ECO:0007669"/>
    <property type="project" value="UniProtKB-UniRule"/>
</dbReference>
<dbReference type="GO" id="GO:0000287">
    <property type="term" value="F:magnesium ion binding"/>
    <property type="evidence" value="ECO:0007669"/>
    <property type="project" value="TreeGrafter"/>
</dbReference>
<dbReference type="GO" id="GO:0015940">
    <property type="term" value="P:pantothenate biosynthetic process"/>
    <property type="evidence" value="ECO:0007669"/>
    <property type="project" value="UniProtKB-UniRule"/>
</dbReference>
<dbReference type="CDD" id="cd06557">
    <property type="entry name" value="KPHMT-like"/>
    <property type="match status" value="1"/>
</dbReference>
<dbReference type="FunFam" id="3.20.20.60:FF:000003">
    <property type="entry name" value="3-methyl-2-oxobutanoate hydroxymethyltransferase"/>
    <property type="match status" value="1"/>
</dbReference>
<dbReference type="Gene3D" id="3.20.20.60">
    <property type="entry name" value="Phosphoenolpyruvate-binding domains"/>
    <property type="match status" value="1"/>
</dbReference>
<dbReference type="HAMAP" id="MF_00156">
    <property type="entry name" value="PanB"/>
    <property type="match status" value="1"/>
</dbReference>
<dbReference type="InterPro" id="IPR003700">
    <property type="entry name" value="Pantoate_hydroxy_MeTrfase"/>
</dbReference>
<dbReference type="InterPro" id="IPR015813">
    <property type="entry name" value="Pyrv/PenolPyrv_kinase-like_dom"/>
</dbReference>
<dbReference type="InterPro" id="IPR040442">
    <property type="entry name" value="Pyrv_kinase-like_dom_sf"/>
</dbReference>
<dbReference type="NCBIfam" id="TIGR00222">
    <property type="entry name" value="panB"/>
    <property type="match status" value="1"/>
</dbReference>
<dbReference type="NCBIfam" id="NF001452">
    <property type="entry name" value="PRK00311.1"/>
    <property type="match status" value="1"/>
</dbReference>
<dbReference type="PANTHER" id="PTHR20881">
    <property type="entry name" value="3-METHYL-2-OXOBUTANOATE HYDROXYMETHYLTRANSFERASE"/>
    <property type="match status" value="1"/>
</dbReference>
<dbReference type="PANTHER" id="PTHR20881:SF0">
    <property type="entry name" value="3-METHYL-2-OXOBUTANOATE HYDROXYMETHYLTRANSFERASE"/>
    <property type="match status" value="1"/>
</dbReference>
<dbReference type="Pfam" id="PF02548">
    <property type="entry name" value="Pantoate_transf"/>
    <property type="match status" value="1"/>
</dbReference>
<dbReference type="PIRSF" id="PIRSF000388">
    <property type="entry name" value="Pantoate_hydroxy_MeTrfase"/>
    <property type="match status" value="1"/>
</dbReference>
<dbReference type="SUPFAM" id="SSF51621">
    <property type="entry name" value="Phosphoenolpyruvate/pyruvate domain"/>
    <property type="match status" value="1"/>
</dbReference>